<sequence>MPSISHPPSALRDFLRSEAAGGVILMAVAVLAMIVANSPLADSYFHLLHVQTGPVLSEKLGPMTPHLWINDALMAVFFLLVGLEIKREFVDGRLVTWQQRRLPFIAALGGMAAPALVFLAVTAQSSGLTQGWAIPAATDIAFAIGVMALLGSRVPTALKLFLTTVAIVDDMGAVVIIALAYTASIKGIALLAAAVILGAMMAMNRAGVRHLAPYLLGFVLLWFAVLVSGVHATIAGVLAAFTVPVVATPGAPDSPDSPLHRLEHALHPWSAFLIVPLFGFANAGISLEGFSLGSLLEPLPLGIAAGLFIGKQLGIFSLIWAAVKLGIAQRPRGSTWLQVYGLSVLCGIGFTMSLFIGMLAFASSPDLIEEAKLGVITGSLLSGVLGYLVLRFAPPAADAAQAETEIDREIEQDGDVEAIEGKLRQ</sequence>
<dbReference type="EMBL" id="CP000248">
    <property type="protein sequence ID" value="ABD24855.1"/>
    <property type="molecule type" value="Genomic_DNA"/>
</dbReference>
<dbReference type="RefSeq" id="WP_011444069.1">
    <property type="nucleotide sequence ID" value="NC_007794.1"/>
</dbReference>
<dbReference type="SMR" id="Q2GBB8"/>
<dbReference type="STRING" id="279238.Saro_0407"/>
<dbReference type="KEGG" id="nar:Saro_0407"/>
<dbReference type="eggNOG" id="COG3004">
    <property type="taxonomic scope" value="Bacteria"/>
</dbReference>
<dbReference type="HOGENOM" id="CLU_015803_1_2_5"/>
<dbReference type="Proteomes" id="UP000009134">
    <property type="component" value="Chromosome"/>
</dbReference>
<dbReference type="GO" id="GO:0005886">
    <property type="term" value="C:plasma membrane"/>
    <property type="evidence" value="ECO:0007669"/>
    <property type="project" value="UniProtKB-SubCell"/>
</dbReference>
<dbReference type="GO" id="GO:0015385">
    <property type="term" value="F:sodium:proton antiporter activity"/>
    <property type="evidence" value="ECO:0007669"/>
    <property type="project" value="TreeGrafter"/>
</dbReference>
<dbReference type="GO" id="GO:0006885">
    <property type="term" value="P:regulation of pH"/>
    <property type="evidence" value="ECO:0007669"/>
    <property type="project" value="InterPro"/>
</dbReference>
<dbReference type="Gene3D" id="1.20.1530.10">
    <property type="entry name" value="Na+/H+ antiporter like domain"/>
    <property type="match status" value="1"/>
</dbReference>
<dbReference type="HAMAP" id="MF_01844">
    <property type="entry name" value="NhaA"/>
    <property type="match status" value="1"/>
</dbReference>
<dbReference type="InterPro" id="IPR023171">
    <property type="entry name" value="Na/H_antiporter_dom_sf"/>
</dbReference>
<dbReference type="InterPro" id="IPR004670">
    <property type="entry name" value="NhaA"/>
</dbReference>
<dbReference type="NCBIfam" id="TIGR00773">
    <property type="entry name" value="NhaA"/>
    <property type="match status" value="1"/>
</dbReference>
<dbReference type="NCBIfam" id="NF007111">
    <property type="entry name" value="PRK09560.1"/>
    <property type="match status" value="1"/>
</dbReference>
<dbReference type="NCBIfam" id="NF007112">
    <property type="entry name" value="PRK09561.1"/>
    <property type="match status" value="1"/>
</dbReference>
<dbReference type="PANTHER" id="PTHR30341:SF0">
    <property type="entry name" value="NA(+)_H(+) ANTIPORTER NHAA"/>
    <property type="match status" value="1"/>
</dbReference>
<dbReference type="PANTHER" id="PTHR30341">
    <property type="entry name" value="SODIUM ION/PROTON ANTIPORTER NHAA-RELATED"/>
    <property type="match status" value="1"/>
</dbReference>
<dbReference type="Pfam" id="PF06965">
    <property type="entry name" value="Na_H_antiport_1"/>
    <property type="match status" value="1"/>
</dbReference>
<evidence type="ECO:0000255" key="1">
    <source>
        <dbReference type="HAMAP-Rule" id="MF_01844"/>
    </source>
</evidence>
<keyword id="KW-0050">Antiport</keyword>
<keyword id="KW-0997">Cell inner membrane</keyword>
<keyword id="KW-1003">Cell membrane</keyword>
<keyword id="KW-0406">Ion transport</keyword>
<keyword id="KW-0472">Membrane</keyword>
<keyword id="KW-1185">Reference proteome</keyword>
<keyword id="KW-0915">Sodium</keyword>
<keyword id="KW-0739">Sodium transport</keyword>
<keyword id="KW-0812">Transmembrane</keyword>
<keyword id="KW-1133">Transmembrane helix</keyword>
<keyword id="KW-0813">Transport</keyword>
<name>NHAA1_NOVAD</name>
<comment type="function">
    <text evidence="1">Na(+)/H(+) antiporter that extrudes sodium in exchange for external protons.</text>
</comment>
<comment type="catalytic activity">
    <reaction evidence="1">
        <text>Na(+)(in) + 2 H(+)(out) = Na(+)(out) + 2 H(+)(in)</text>
        <dbReference type="Rhea" id="RHEA:29251"/>
        <dbReference type="ChEBI" id="CHEBI:15378"/>
        <dbReference type="ChEBI" id="CHEBI:29101"/>
    </reaction>
    <physiologicalReaction direction="left-to-right" evidence="1">
        <dbReference type="Rhea" id="RHEA:29252"/>
    </physiologicalReaction>
</comment>
<comment type="subcellular location">
    <subcellularLocation>
        <location evidence="1">Cell inner membrane</location>
        <topology evidence="1">Multi-pass membrane protein</topology>
    </subcellularLocation>
</comment>
<comment type="similarity">
    <text evidence="1">Belongs to the NhaA Na(+)/H(+) (TC 2.A.33) antiporter family.</text>
</comment>
<organism>
    <name type="scientific">Novosphingobium aromaticivorans (strain ATCC 700278 / DSM 12444 / CCUG 56034 / CIP 105152 / NBRC 16084 / F199)</name>
    <dbReference type="NCBI Taxonomy" id="279238"/>
    <lineage>
        <taxon>Bacteria</taxon>
        <taxon>Pseudomonadati</taxon>
        <taxon>Pseudomonadota</taxon>
        <taxon>Alphaproteobacteria</taxon>
        <taxon>Sphingomonadales</taxon>
        <taxon>Sphingomonadaceae</taxon>
        <taxon>Novosphingobium</taxon>
    </lineage>
</organism>
<reference key="1">
    <citation type="submission" date="2006-01" db="EMBL/GenBank/DDBJ databases">
        <title>Complete sequence of Novosphingobium aromaticivorans DSM 12444.</title>
        <authorList>
            <consortium name="US DOE Joint Genome Institute"/>
            <person name="Copeland A."/>
            <person name="Lucas S."/>
            <person name="Lapidus A."/>
            <person name="Barry K."/>
            <person name="Detter J.C."/>
            <person name="Glavina T."/>
            <person name="Hammon N."/>
            <person name="Israni S."/>
            <person name="Pitluck S."/>
            <person name="Chain P."/>
            <person name="Malfatti S."/>
            <person name="Shin M."/>
            <person name="Vergez L."/>
            <person name="Schmutz J."/>
            <person name="Larimer F."/>
            <person name="Land M."/>
            <person name="Kyrpides N."/>
            <person name="Ivanova N."/>
            <person name="Fredrickson J."/>
            <person name="Balkwill D."/>
            <person name="Romine M.F."/>
            <person name="Richardson P."/>
        </authorList>
    </citation>
    <scope>NUCLEOTIDE SEQUENCE [LARGE SCALE GENOMIC DNA]</scope>
    <source>
        <strain>ATCC 700278 / DSM 12444 / CCUG 56034 / CIP 105152 / NBRC 16084 / F199</strain>
    </source>
</reference>
<feature type="chain" id="PRO_0000334350" description="Na(+)/H(+) antiporter NhaA 1">
    <location>
        <begin position="1"/>
        <end position="425"/>
    </location>
</feature>
<feature type="transmembrane region" description="Helical" evidence="1">
    <location>
        <begin position="20"/>
        <end position="40"/>
    </location>
</feature>
<feature type="transmembrane region" description="Helical" evidence="1">
    <location>
        <begin position="65"/>
        <end position="85"/>
    </location>
</feature>
<feature type="transmembrane region" description="Helical" evidence="1">
    <location>
        <begin position="102"/>
        <end position="122"/>
    </location>
</feature>
<feature type="transmembrane region" description="Helical" evidence="1">
    <location>
        <begin position="131"/>
        <end position="151"/>
    </location>
</feature>
<feature type="transmembrane region" description="Helical" evidence="1">
    <location>
        <begin position="160"/>
        <end position="180"/>
    </location>
</feature>
<feature type="transmembrane region" description="Helical" evidence="1">
    <location>
        <begin position="183"/>
        <end position="203"/>
    </location>
</feature>
<feature type="transmembrane region" description="Helical" evidence="1">
    <location>
        <begin position="218"/>
        <end position="238"/>
    </location>
</feature>
<feature type="transmembrane region" description="Helical" evidence="1">
    <location>
        <begin position="272"/>
        <end position="292"/>
    </location>
</feature>
<feature type="transmembrane region" description="Helical" evidence="1">
    <location>
        <begin position="303"/>
        <end position="323"/>
    </location>
</feature>
<feature type="transmembrane region" description="Helical" evidence="1">
    <location>
        <begin position="342"/>
        <end position="362"/>
    </location>
</feature>
<feature type="transmembrane region" description="Helical" evidence="1">
    <location>
        <begin position="373"/>
        <end position="393"/>
    </location>
</feature>
<protein>
    <recommendedName>
        <fullName evidence="1">Na(+)/H(+) antiporter NhaA 1</fullName>
    </recommendedName>
    <alternativeName>
        <fullName evidence="1">Sodium/proton antiporter NhaA 1</fullName>
    </alternativeName>
</protein>
<proteinExistence type="inferred from homology"/>
<accession>Q2GBB8</accession>
<gene>
    <name evidence="1" type="primary">nhaA1</name>
    <name type="ordered locus">Saro_0407</name>
</gene>